<gene>
    <name type="primary">DEFB118</name>
</gene>
<organism>
    <name type="scientific">Hylobates lar</name>
    <name type="common">Lar gibbon</name>
    <name type="synonym">White-handed gibbon</name>
    <dbReference type="NCBI Taxonomy" id="9580"/>
    <lineage>
        <taxon>Eukaryota</taxon>
        <taxon>Metazoa</taxon>
        <taxon>Chordata</taxon>
        <taxon>Craniata</taxon>
        <taxon>Vertebrata</taxon>
        <taxon>Euteleostomi</taxon>
        <taxon>Mammalia</taxon>
        <taxon>Eutheria</taxon>
        <taxon>Euarchontoglires</taxon>
        <taxon>Primates</taxon>
        <taxon>Haplorrhini</taxon>
        <taxon>Catarrhini</taxon>
        <taxon>Hylobatidae</taxon>
        <taxon>Hylobates</taxon>
    </lineage>
</organism>
<evidence type="ECO:0000250" key="1">
    <source>
        <dbReference type="UniProtKB" id="Q91V82"/>
    </source>
</evidence>
<evidence type="ECO:0000250" key="2">
    <source>
        <dbReference type="UniProtKB" id="Q96PH6"/>
    </source>
</evidence>
<evidence type="ECO:0000255" key="3"/>
<evidence type="ECO:0000256" key="4">
    <source>
        <dbReference type="SAM" id="MobiDB-lite"/>
    </source>
</evidence>
<evidence type="ECO:0000305" key="5"/>
<comment type="function">
    <text evidence="2">Host defense peptide that exhibits antimicrobial activity against both Gram-negative bacteria, such as E.coli and S.typhimurium, and Gram-positive bacteria, such as S.aureus and B.subtilis (By similarity). Inhibits cell adhesion of E.coli on intestinal epithelial enterocytes (By similarity). Causes rapid permeabilization of both the outer and inner membrane of E.coli, leading to morphological alterations on the bacterial surface (By similarity). Binds to bacterial lipopolysaccharides (LPS) with high affinity, and may thereby be involved in immunoregulation through LPS neutralization (By similarity). May contribute to epididymal innate immunity and protect the sperm against attack by microorganisms (By similarity).</text>
</comment>
<comment type="subcellular location">
    <subcellularLocation>
        <location evidence="2">Secreted</location>
    </subcellularLocation>
</comment>
<comment type="PTM">
    <text evidence="2">The three-dimensional structure formed by the three intramolecular disulfide bridges is indispensable for antimicrobial activity.</text>
</comment>
<comment type="similarity">
    <text evidence="5">Belongs to the beta-defensin family.</text>
</comment>
<feature type="signal peptide" evidence="3">
    <location>
        <begin position="1"/>
        <end position="19"/>
    </location>
</feature>
<feature type="peptide" id="PRO_0000289824" description="Defensin beta 118">
    <location>
        <begin position="20"/>
        <end position="62"/>
    </location>
</feature>
<feature type="propeptide" id="PRO_0000289825" evidence="3">
    <location>
        <begin position="64"/>
        <end position="123"/>
    </location>
</feature>
<feature type="region of interest" description="Disordered" evidence="4">
    <location>
        <begin position="59"/>
        <end position="79"/>
    </location>
</feature>
<feature type="region of interest" description="Disordered" evidence="4">
    <location>
        <begin position="102"/>
        <end position="123"/>
    </location>
</feature>
<feature type="compositionally biased region" description="Low complexity" evidence="4">
    <location>
        <begin position="66"/>
        <end position="79"/>
    </location>
</feature>
<feature type="disulfide bond" evidence="1">
    <location>
        <begin position="27"/>
        <end position="54"/>
    </location>
</feature>
<feature type="disulfide bond" evidence="1">
    <location>
        <begin position="34"/>
        <end position="48"/>
    </location>
</feature>
<feature type="disulfide bond" evidence="1">
    <location>
        <begin position="38"/>
        <end position="55"/>
    </location>
</feature>
<protein>
    <recommendedName>
        <fullName evidence="2">Defensin beta 118</fullName>
    </recommendedName>
    <alternativeName>
        <fullName evidence="5">Beta-defensin 118</fullName>
    </alternativeName>
</protein>
<dbReference type="EMBL" id="AM410127">
    <property type="protein sequence ID" value="CAL68942.1"/>
    <property type="molecule type" value="Genomic_DNA"/>
</dbReference>
<dbReference type="SMR" id="A4H222"/>
<dbReference type="GO" id="GO:0005576">
    <property type="term" value="C:extracellular region"/>
    <property type="evidence" value="ECO:0007669"/>
    <property type="project" value="UniProtKB-SubCell"/>
</dbReference>
<dbReference type="GO" id="GO:0001530">
    <property type="term" value="F:lipopolysaccharide binding"/>
    <property type="evidence" value="ECO:0000250"/>
    <property type="project" value="UniProtKB"/>
</dbReference>
<dbReference type="GO" id="GO:0050829">
    <property type="term" value="P:defense response to Gram-negative bacterium"/>
    <property type="evidence" value="ECO:0000250"/>
    <property type="project" value="UniProtKB"/>
</dbReference>
<dbReference type="GO" id="GO:0050830">
    <property type="term" value="P:defense response to Gram-positive bacterium"/>
    <property type="evidence" value="ECO:0000250"/>
    <property type="project" value="UniProtKB"/>
</dbReference>
<dbReference type="GO" id="GO:0045087">
    <property type="term" value="P:innate immune response"/>
    <property type="evidence" value="ECO:0000250"/>
    <property type="project" value="UniProtKB"/>
</dbReference>
<dbReference type="GO" id="GO:0031640">
    <property type="term" value="P:killing of cells of another organism"/>
    <property type="evidence" value="ECO:0000250"/>
    <property type="project" value="UniProtKB"/>
</dbReference>
<dbReference type="GO" id="GO:0007162">
    <property type="term" value="P:negative regulation of cell adhesion"/>
    <property type="evidence" value="ECO:0000250"/>
    <property type="project" value="UniProtKB"/>
</dbReference>
<dbReference type="GO" id="GO:0031665">
    <property type="term" value="P:negative regulation of lipopolysaccharide-mediated signaling pathway"/>
    <property type="evidence" value="ECO:0000250"/>
    <property type="project" value="UniProtKB"/>
</dbReference>
<dbReference type="InterPro" id="IPR050544">
    <property type="entry name" value="Beta-defensin"/>
</dbReference>
<dbReference type="InterPro" id="IPR025933">
    <property type="entry name" value="Beta_defensin_dom"/>
</dbReference>
<dbReference type="PANTHER" id="PTHR15001">
    <property type="entry name" value="BETA-DEFENSIN 123-RELATED"/>
    <property type="match status" value="1"/>
</dbReference>
<dbReference type="PANTHER" id="PTHR15001:SF7">
    <property type="entry name" value="DEFENSIN BETA 118"/>
    <property type="match status" value="1"/>
</dbReference>
<dbReference type="Pfam" id="PF13841">
    <property type="entry name" value="Defensin_beta_2"/>
    <property type="match status" value="1"/>
</dbReference>
<reference key="1">
    <citation type="submission" date="2006-11" db="EMBL/GenBank/DDBJ databases">
        <title>Evolution and sequence variation of human beta-defensin genes.</title>
        <authorList>
            <person name="Hollox E.J."/>
            <person name="Armour J.A.L."/>
        </authorList>
    </citation>
    <scope>NUCLEOTIDE SEQUENCE [GENOMIC DNA]</scope>
</reference>
<accession>A4H222</accession>
<proteinExistence type="inferred from homology"/>
<keyword id="KW-0044">Antibiotic</keyword>
<keyword id="KW-0929">Antimicrobial</keyword>
<keyword id="KW-0165">Cleavage on pair of basic residues</keyword>
<keyword id="KW-0211">Defensin</keyword>
<keyword id="KW-1015">Disulfide bond</keyword>
<keyword id="KW-0964">Secreted</keyword>
<keyword id="KW-0732">Signal</keyword>
<name>DB118_HYLLA</name>
<sequence>MKLLLLALPMLVLLPQVIPAYSGEKKCWNRSGHCRKQCKDGEAVKDTCKNLRACCVPSNEDHRQVPTTSPTPLSDSTPGSIDDILTVRFTTDYFEVSSKKDMVEESEAGWGTQTSLPDVHHSS</sequence>